<evidence type="ECO:0000255" key="1">
    <source>
        <dbReference type="HAMAP-Rule" id="MF_00539"/>
    </source>
</evidence>
<evidence type="ECO:0000305" key="2"/>
<gene>
    <name evidence="1" type="primary">rpmA</name>
    <name type="ordered locus">Smal_1120</name>
</gene>
<dbReference type="EMBL" id="CP001111">
    <property type="protein sequence ID" value="ACF50825.1"/>
    <property type="molecule type" value="Genomic_DNA"/>
</dbReference>
<dbReference type="RefSeq" id="WP_004148333.1">
    <property type="nucleotide sequence ID" value="NC_011071.1"/>
</dbReference>
<dbReference type="SMR" id="B4SP13"/>
<dbReference type="STRING" id="391008.Smal_1120"/>
<dbReference type="KEGG" id="smt:Smal_1120"/>
<dbReference type="eggNOG" id="COG0211">
    <property type="taxonomic scope" value="Bacteria"/>
</dbReference>
<dbReference type="HOGENOM" id="CLU_095424_4_1_6"/>
<dbReference type="OrthoDB" id="9803474at2"/>
<dbReference type="Proteomes" id="UP000001867">
    <property type="component" value="Chromosome"/>
</dbReference>
<dbReference type="GO" id="GO:0022625">
    <property type="term" value="C:cytosolic large ribosomal subunit"/>
    <property type="evidence" value="ECO:0007669"/>
    <property type="project" value="TreeGrafter"/>
</dbReference>
<dbReference type="GO" id="GO:0003735">
    <property type="term" value="F:structural constituent of ribosome"/>
    <property type="evidence" value="ECO:0007669"/>
    <property type="project" value="InterPro"/>
</dbReference>
<dbReference type="GO" id="GO:0006412">
    <property type="term" value="P:translation"/>
    <property type="evidence" value="ECO:0007669"/>
    <property type="project" value="UniProtKB-UniRule"/>
</dbReference>
<dbReference type="FunFam" id="2.40.50.100:FF:000001">
    <property type="entry name" value="50S ribosomal protein L27"/>
    <property type="match status" value="1"/>
</dbReference>
<dbReference type="Gene3D" id="2.40.50.100">
    <property type="match status" value="1"/>
</dbReference>
<dbReference type="HAMAP" id="MF_00539">
    <property type="entry name" value="Ribosomal_bL27"/>
    <property type="match status" value="1"/>
</dbReference>
<dbReference type="InterPro" id="IPR001684">
    <property type="entry name" value="Ribosomal_bL27"/>
</dbReference>
<dbReference type="InterPro" id="IPR018261">
    <property type="entry name" value="Ribosomal_bL27_CS"/>
</dbReference>
<dbReference type="NCBIfam" id="TIGR00062">
    <property type="entry name" value="L27"/>
    <property type="match status" value="1"/>
</dbReference>
<dbReference type="PANTHER" id="PTHR15893:SF0">
    <property type="entry name" value="LARGE RIBOSOMAL SUBUNIT PROTEIN BL27M"/>
    <property type="match status" value="1"/>
</dbReference>
<dbReference type="PANTHER" id="PTHR15893">
    <property type="entry name" value="RIBOSOMAL PROTEIN L27"/>
    <property type="match status" value="1"/>
</dbReference>
<dbReference type="Pfam" id="PF01016">
    <property type="entry name" value="Ribosomal_L27"/>
    <property type="match status" value="1"/>
</dbReference>
<dbReference type="PRINTS" id="PR00063">
    <property type="entry name" value="RIBOSOMALL27"/>
</dbReference>
<dbReference type="SUPFAM" id="SSF110324">
    <property type="entry name" value="Ribosomal L27 protein-like"/>
    <property type="match status" value="1"/>
</dbReference>
<dbReference type="PROSITE" id="PS00831">
    <property type="entry name" value="RIBOSOMAL_L27"/>
    <property type="match status" value="1"/>
</dbReference>
<feature type="chain" id="PRO_1000128812" description="Large ribosomal subunit protein bL27">
    <location>
        <begin position="1"/>
        <end position="87"/>
    </location>
</feature>
<sequence length="87" mass="9219">MAHKKGVGSSRNGRDSNPKYLGVKIFGGQAIEAGNIIVRQRGTQFHPGSGVGLGRDHTLFALVDGKVEFSVKGAKKRRTVSVVSVEA</sequence>
<accession>B4SP13</accession>
<comment type="similarity">
    <text evidence="1">Belongs to the bacterial ribosomal protein bL27 family.</text>
</comment>
<protein>
    <recommendedName>
        <fullName evidence="1">Large ribosomal subunit protein bL27</fullName>
    </recommendedName>
    <alternativeName>
        <fullName evidence="2">50S ribosomal protein L27</fullName>
    </alternativeName>
</protein>
<keyword id="KW-0687">Ribonucleoprotein</keyword>
<keyword id="KW-0689">Ribosomal protein</keyword>
<reference key="1">
    <citation type="submission" date="2008-06" db="EMBL/GenBank/DDBJ databases">
        <title>Complete sequence of Stenotrophomonas maltophilia R551-3.</title>
        <authorList>
            <consortium name="US DOE Joint Genome Institute"/>
            <person name="Lucas S."/>
            <person name="Copeland A."/>
            <person name="Lapidus A."/>
            <person name="Glavina del Rio T."/>
            <person name="Dalin E."/>
            <person name="Tice H."/>
            <person name="Pitluck S."/>
            <person name="Chain P."/>
            <person name="Malfatti S."/>
            <person name="Shin M."/>
            <person name="Vergez L."/>
            <person name="Lang D."/>
            <person name="Schmutz J."/>
            <person name="Larimer F."/>
            <person name="Land M."/>
            <person name="Hauser L."/>
            <person name="Kyrpides N."/>
            <person name="Mikhailova N."/>
            <person name="Taghavi S."/>
            <person name="Monchy S."/>
            <person name="Newman L."/>
            <person name="Vangronsveld J."/>
            <person name="van der Lelie D."/>
            <person name="Richardson P."/>
        </authorList>
    </citation>
    <scope>NUCLEOTIDE SEQUENCE [LARGE SCALE GENOMIC DNA]</scope>
    <source>
        <strain>R551-3</strain>
    </source>
</reference>
<name>RL27_STRM5</name>
<proteinExistence type="inferred from homology"/>
<organism>
    <name type="scientific">Stenotrophomonas maltophilia (strain R551-3)</name>
    <dbReference type="NCBI Taxonomy" id="391008"/>
    <lineage>
        <taxon>Bacteria</taxon>
        <taxon>Pseudomonadati</taxon>
        <taxon>Pseudomonadota</taxon>
        <taxon>Gammaproteobacteria</taxon>
        <taxon>Lysobacterales</taxon>
        <taxon>Lysobacteraceae</taxon>
        <taxon>Stenotrophomonas</taxon>
        <taxon>Stenotrophomonas maltophilia group</taxon>
    </lineage>
</organism>